<gene>
    <name evidence="1" type="primary">citG</name>
    <name type="ordered locus">PC1_1757</name>
</gene>
<keyword id="KW-0067">ATP-binding</keyword>
<keyword id="KW-0547">Nucleotide-binding</keyword>
<keyword id="KW-0808">Transferase</keyword>
<evidence type="ECO:0000255" key="1">
    <source>
        <dbReference type="HAMAP-Rule" id="MF_00397"/>
    </source>
</evidence>
<reference key="1">
    <citation type="submission" date="2009-07" db="EMBL/GenBank/DDBJ databases">
        <title>Complete sequence of Pectobacterium carotovorum subsp. carotovorum PC1.</title>
        <authorList>
            <consortium name="US DOE Joint Genome Institute"/>
            <person name="Lucas S."/>
            <person name="Copeland A."/>
            <person name="Lapidus A."/>
            <person name="Glavina del Rio T."/>
            <person name="Tice H."/>
            <person name="Bruce D."/>
            <person name="Goodwin L."/>
            <person name="Pitluck S."/>
            <person name="Munk A.C."/>
            <person name="Brettin T."/>
            <person name="Detter J.C."/>
            <person name="Han C."/>
            <person name="Tapia R."/>
            <person name="Larimer F."/>
            <person name="Land M."/>
            <person name="Hauser L."/>
            <person name="Kyrpides N."/>
            <person name="Mikhailova N."/>
            <person name="Balakrishnan V."/>
            <person name="Glasner J."/>
            <person name="Perna N.T."/>
        </authorList>
    </citation>
    <scope>NUCLEOTIDE SEQUENCE [LARGE SCALE GENOMIC DNA]</scope>
    <source>
        <strain>PC1</strain>
    </source>
</reference>
<accession>C6DF89</accession>
<feature type="chain" id="PRO_1000205874" description="Probable 2-(5''-triphosphoribosyl)-3'-dephosphocoenzyme-A synthase">
    <location>
        <begin position="1"/>
        <end position="301"/>
    </location>
</feature>
<sequence>MPTLRQPDGVLSVALSHSVVSEYRECDSLPDIDQRVAHALTMEVMLTPKPGLVDRANNGAHRDMDVALFQTSIQAISPWFRHFTDAGYQHANIPLAQLLSQVRPIGIACEQAMLSATKGVNTHKGGIFAFGLLCTAAGWLAGRGERVTQRSLCDSVAAMCHDLVRNELETCSGAATAGEHLYQRHGLTGARGEAASGFNTVCQYALPALQQAIAAGADNETALLRTLLVLMAHNPDTNVVSRGGMDGLAFVQAYAQKLLVGPLDRQALIKMDDALIARNLSPGGSADLLALTWLLYHYPAE</sequence>
<dbReference type="EC" id="2.4.2.52" evidence="1"/>
<dbReference type="EMBL" id="CP001657">
    <property type="protein sequence ID" value="ACT12798.1"/>
    <property type="molecule type" value="Genomic_DNA"/>
</dbReference>
<dbReference type="RefSeq" id="WP_015840007.1">
    <property type="nucleotide sequence ID" value="NC_012917.1"/>
</dbReference>
<dbReference type="STRING" id="561230.PC1_1757"/>
<dbReference type="KEGG" id="pct:PC1_1757"/>
<dbReference type="eggNOG" id="COG1767">
    <property type="taxonomic scope" value="Bacteria"/>
</dbReference>
<dbReference type="HOGENOM" id="CLU_056179_1_0_6"/>
<dbReference type="OrthoDB" id="114886at2"/>
<dbReference type="Proteomes" id="UP000002736">
    <property type="component" value="Chromosome"/>
</dbReference>
<dbReference type="GO" id="GO:0005524">
    <property type="term" value="F:ATP binding"/>
    <property type="evidence" value="ECO:0007669"/>
    <property type="project" value="UniProtKB-KW"/>
</dbReference>
<dbReference type="GO" id="GO:0046917">
    <property type="term" value="F:triphosphoribosyl-dephospho-CoA synthase activity"/>
    <property type="evidence" value="ECO:0007669"/>
    <property type="project" value="UniProtKB-UniRule"/>
</dbReference>
<dbReference type="GO" id="GO:0051191">
    <property type="term" value="P:prosthetic group biosynthetic process"/>
    <property type="evidence" value="ECO:0007669"/>
    <property type="project" value="TreeGrafter"/>
</dbReference>
<dbReference type="Gene3D" id="1.10.4200.10">
    <property type="entry name" value="Triphosphoribosyl-dephospho-CoA protein"/>
    <property type="match status" value="1"/>
</dbReference>
<dbReference type="HAMAP" id="MF_00397">
    <property type="entry name" value="CitG"/>
    <property type="match status" value="1"/>
</dbReference>
<dbReference type="InterPro" id="IPR002736">
    <property type="entry name" value="CitG"/>
</dbReference>
<dbReference type="InterPro" id="IPR017551">
    <property type="entry name" value="TriPribosyl-deP-CoA_syn_CitG"/>
</dbReference>
<dbReference type="NCBIfam" id="TIGR03125">
    <property type="entry name" value="citrate_citG"/>
    <property type="match status" value="1"/>
</dbReference>
<dbReference type="PANTHER" id="PTHR30201:SF2">
    <property type="entry name" value="2-(5''-TRIPHOSPHORIBOSYL)-3'-DEPHOSPHOCOENZYME-A SYNTHASE"/>
    <property type="match status" value="1"/>
</dbReference>
<dbReference type="PANTHER" id="PTHR30201">
    <property type="entry name" value="TRIPHOSPHORIBOSYL-DEPHOSPHO-COA SYNTHASE"/>
    <property type="match status" value="1"/>
</dbReference>
<dbReference type="Pfam" id="PF01874">
    <property type="entry name" value="CitG"/>
    <property type="match status" value="1"/>
</dbReference>
<organism>
    <name type="scientific">Pectobacterium carotovorum subsp. carotovorum (strain PC1)</name>
    <dbReference type="NCBI Taxonomy" id="561230"/>
    <lineage>
        <taxon>Bacteria</taxon>
        <taxon>Pseudomonadati</taxon>
        <taxon>Pseudomonadota</taxon>
        <taxon>Gammaproteobacteria</taxon>
        <taxon>Enterobacterales</taxon>
        <taxon>Pectobacteriaceae</taxon>
        <taxon>Pectobacterium</taxon>
    </lineage>
</organism>
<proteinExistence type="inferred from homology"/>
<comment type="catalytic activity">
    <reaction evidence="1">
        <text>3'-dephospho-CoA + ATP = 2'-(5''-triphospho-alpha-D-ribosyl)-3'-dephospho-CoA + adenine</text>
        <dbReference type="Rhea" id="RHEA:15117"/>
        <dbReference type="ChEBI" id="CHEBI:16708"/>
        <dbReference type="ChEBI" id="CHEBI:30616"/>
        <dbReference type="ChEBI" id="CHEBI:57328"/>
        <dbReference type="ChEBI" id="CHEBI:61378"/>
        <dbReference type="EC" id="2.4.2.52"/>
    </reaction>
</comment>
<comment type="similarity">
    <text evidence="1">Belongs to the CitG/MdcB family.</text>
</comment>
<name>CITG_PECCP</name>
<protein>
    <recommendedName>
        <fullName evidence="1">Probable 2-(5''-triphosphoribosyl)-3'-dephosphocoenzyme-A synthase</fullName>
        <shortName evidence="1">2-(5''-triphosphoribosyl)-3'-dephospho-CoA synthase</shortName>
        <ecNumber evidence="1">2.4.2.52</ecNumber>
    </recommendedName>
</protein>